<proteinExistence type="inferred from homology"/>
<evidence type="ECO:0000255" key="1">
    <source>
        <dbReference type="HAMAP-Rule" id="MF_01818"/>
    </source>
</evidence>
<protein>
    <recommendedName>
        <fullName evidence="1">Ribonuclease Z</fullName>
        <shortName evidence="1">RNase Z</shortName>
        <ecNumber evidence="1">3.1.26.11</ecNumber>
    </recommendedName>
    <alternativeName>
        <fullName evidence="1">tRNA 3 endonuclease</fullName>
    </alternativeName>
    <alternativeName>
        <fullName evidence="1">tRNase Z</fullName>
    </alternativeName>
</protein>
<comment type="function">
    <text evidence="1">Zinc phosphodiesterase, which displays some tRNA 3'-processing endonuclease activity. Probably involved in tRNA maturation, by removing a 3'-trailer from precursor tRNA.</text>
</comment>
<comment type="catalytic activity">
    <reaction evidence="1">
        <text>Endonucleolytic cleavage of RNA, removing extra 3' nucleotides from tRNA precursor, generating 3' termini of tRNAs. A 3'-hydroxy group is left at the tRNA terminus and a 5'-phosphoryl group is left at the trailer molecule.</text>
        <dbReference type="EC" id="3.1.26.11"/>
    </reaction>
</comment>
<comment type="cofactor">
    <cofactor evidence="1">
        <name>Zn(2+)</name>
        <dbReference type="ChEBI" id="CHEBI:29105"/>
    </cofactor>
    <text evidence="1">Binds 2 Zn(2+) ions.</text>
</comment>
<comment type="subunit">
    <text evidence="1">Homodimer.</text>
</comment>
<comment type="similarity">
    <text evidence="1">Belongs to the RNase Z family.</text>
</comment>
<feature type="chain" id="PRO_1000070270" description="Ribonuclease Z">
    <location>
        <begin position="1"/>
        <end position="305"/>
    </location>
</feature>
<feature type="active site" description="Proton acceptor" evidence="1">
    <location>
        <position position="65"/>
    </location>
</feature>
<feature type="binding site" evidence="1">
    <location>
        <position position="61"/>
    </location>
    <ligand>
        <name>Zn(2+)</name>
        <dbReference type="ChEBI" id="CHEBI:29105"/>
        <label>1</label>
        <note>catalytic</note>
    </ligand>
</feature>
<feature type="binding site" evidence="1">
    <location>
        <position position="63"/>
    </location>
    <ligand>
        <name>Zn(2+)</name>
        <dbReference type="ChEBI" id="CHEBI:29105"/>
        <label>1</label>
        <note>catalytic</note>
    </ligand>
</feature>
<feature type="binding site" evidence="1">
    <location>
        <position position="65"/>
    </location>
    <ligand>
        <name>Zn(2+)</name>
        <dbReference type="ChEBI" id="CHEBI:29105"/>
        <label>2</label>
        <note>catalytic</note>
    </ligand>
</feature>
<feature type="binding site" evidence="1">
    <location>
        <position position="66"/>
    </location>
    <ligand>
        <name>Zn(2+)</name>
        <dbReference type="ChEBI" id="CHEBI:29105"/>
        <label>2</label>
        <note>catalytic</note>
    </ligand>
</feature>
<feature type="binding site" evidence="1">
    <location>
        <position position="141"/>
    </location>
    <ligand>
        <name>Zn(2+)</name>
        <dbReference type="ChEBI" id="CHEBI:29105"/>
        <label>1</label>
        <note>catalytic</note>
    </ligand>
</feature>
<feature type="binding site" evidence="1">
    <location>
        <position position="209"/>
    </location>
    <ligand>
        <name>Zn(2+)</name>
        <dbReference type="ChEBI" id="CHEBI:29105"/>
        <label>1</label>
        <note>catalytic</note>
    </ligand>
</feature>
<feature type="binding site" evidence="1">
    <location>
        <position position="209"/>
    </location>
    <ligand>
        <name>Zn(2+)</name>
        <dbReference type="ChEBI" id="CHEBI:29105"/>
        <label>2</label>
        <note>catalytic</note>
    </ligand>
</feature>
<feature type="binding site" evidence="1">
    <location>
        <position position="268"/>
    </location>
    <ligand>
        <name>Zn(2+)</name>
        <dbReference type="ChEBI" id="CHEBI:29105"/>
        <label>2</label>
        <note>catalytic</note>
    </ligand>
</feature>
<sequence length="305" mass="34276">MIDLTLLGCGGNVPMPNRFLSSVFINYKGRKILIDCGEGTQVSMKLKKCGFKDIDLICITHLHGDHIFGLLGLLSTIGNSGRTSDLTIVGPVGIVDCIRSMRNLVEYVPYTLKIIENPQGNFSLDNKVLRNLEISTISLEHSIECLGYSFNFRRNPKFDIDKATKNEVPKILWNKLQEGQNIVLDSKQYTPDMVLGELRKGVKISLTTDTRPIESIPDFIKDSDLFICEAMYGDDLDISKAVRNKHMTFREAANLAKLGNVKQLLLTHFSPSLDIPSMYLENATNVFENTILGEDRLSLRLNFDE</sequence>
<accession>Q182M7</accession>
<name>RNZ_CLOD6</name>
<keyword id="KW-0255">Endonuclease</keyword>
<keyword id="KW-0378">Hydrolase</keyword>
<keyword id="KW-0479">Metal-binding</keyword>
<keyword id="KW-0540">Nuclease</keyword>
<keyword id="KW-1185">Reference proteome</keyword>
<keyword id="KW-0819">tRNA processing</keyword>
<keyword id="KW-0862">Zinc</keyword>
<dbReference type="EC" id="3.1.26.11" evidence="1"/>
<dbReference type="EMBL" id="AM180355">
    <property type="protein sequence ID" value="CAJ69426.1"/>
    <property type="molecule type" value="Genomic_DNA"/>
</dbReference>
<dbReference type="RefSeq" id="WP_004454848.1">
    <property type="nucleotide sequence ID" value="NZ_JAUPES010000003.1"/>
</dbReference>
<dbReference type="RefSeq" id="YP_001089053.1">
    <property type="nucleotide sequence ID" value="NC_009089.1"/>
</dbReference>
<dbReference type="SMR" id="Q182M7"/>
<dbReference type="STRING" id="272563.CD630_25390"/>
<dbReference type="EnsemblBacteria" id="CAJ69426">
    <property type="protein sequence ID" value="CAJ69426"/>
    <property type="gene ID" value="CD630_25390"/>
</dbReference>
<dbReference type="KEGG" id="cdf:CD630_25390"/>
<dbReference type="KEGG" id="pdc:CDIF630_02791"/>
<dbReference type="PATRIC" id="fig|272563.120.peg.2679"/>
<dbReference type="eggNOG" id="COG1234">
    <property type="taxonomic scope" value="Bacteria"/>
</dbReference>
<dbReference type="OrthoDB" id="9800940at2"/>
<dbReference type="PhylomeDB" id="Q182M7"/>
<dbReference type="BioCyc" id="PDIF272563:G12WB-2694-MONOMER"/>
<dbReference type="Proteomes" id="UP000001978">
    <property type="component" value="Chromosome"/>
</dbReference>
<dbReference type="GO" id="GO:0042781">
    <property type="term" value="F:3'-tRNA processing endoribonuclease activity"/>
    <property type="evidence" value="ECO:0007669"/>
    <property type="project" value="UniProtKB-UniRule"/>
</dbReference>
<dbReference type="GO" id="GO:0008270">
    <property type="term" value="F:zinc ion binding"/>
    <property type="evidence" value="ECO:0007669"/>
    <property type="project" value="UniProtKB-UniRule"/>
</dbReference>
<dbReference type="CDD" id="cd07717">
    <property type="entry name" value="RNaseZ_ZiPD-like_MBL-fold"/>
    <property type="match status" value="1"/>
</dbReference>
<dbReference type="Gene3D" id="3.60.15.10">
    <property type="entry name" value="Ribonuclease Z/Hydroxyacylglutathione hydrolase-like"/>
    <property type="match status" value="1"/>
</dbReference>
<dbReference type="HAMAP" id="MF_01818">
    <property type="entry name" value="RNase_Z_BN"/>
    <property type="match status" value="1"/>
</dbReference>
<dbReference type="InterPro" id="IPR001279">
    <property type="entry name" value="Metallo-B-lactamas"/>
</dbReference>
<dbReference type="InterPro" id="IPR036866">
    <property type="entry name" value="RibonucZ/Hydroxyglut_hydro"/>
</dbReference>
<dbReference type="InterPro" id="IPR013471">
    <property type="entry name" value="RNase_Z/BN"/>
</dbReference>
<dbReference type="NCBIfam" id="NF000801">
    <property type="entry name" value="PRK00055.1-3"/>
    <property type="match status" value="1"/>
</dbReference>
<dbReference type="NCBIfam" id="TIGR02651">
    <property type="entry name" value="RNase_Z"/>
    <property type="match status" value="1"/>
</dbReference>
<dbReference type="PANTHER" id="PTHR46018">
    <property type="entry name" value="ZINC PHOSPHODIESTERASE ELAC PROTEIN 1"/>
    <property type="match status" value="1"/>
</dbReference>
<dbReference type="PANTHER" id="PTHR46018:SF2">
    <property type="entry name" value="ZINC PHOSPHODIESTERASE ELAC PROTEIN 1"/>
    <property type="match status" value="1"/>
</dbReference>
<dbReference type="Pfam" id="PF00753">
    <property type="entry name" value="Lactamase_B"/>
    <property type="match status" value="1"/>
</dbReference>
<dbReference type="SUPFAM" id="SSF56281">
    <property type="entry name" value="Metallo-hydrolase/oxidoreductase"/>
    <property type="match status" value="1"/>
</dbReference>
<organism>
    <name type="scientific">Clostridioides difficile (strain 630)</name>
    <name type="common">Peptoclostridium difficile</name>
    <dbReference type="NCBI Taxonomy" id="272563"/>
    <lineage>
        <taxon>Bacteria</taxon>
        <taxon>Bacillati</taxon>
        <taxon>Bacillota</taxon>
        <taxon>Clostridia</taxon>
        <taxon>Peptostreptococcales</taxon>
        <taxon>Peptostreptococcaceae</taxon>
        <taxon>Clostridioides</taxon>
    </lineage>
</organism>
<gene>
    <name evidence="1" type="primary">rnz</name>
    <name type="ordered locus">CD630_25390</name>
</gene>
<reference key="1">
    <citation type="journal article" date="2006" name="Nat. Genet.">
        <title>The multidrug-resistant human pathogen Clostridium difficile has a highly mobile, mosaic genome.</title>
        <authorList>
            <person name="Sebaihia M."/>
            <person name="Wren B.W."/>
            <person name="Mullany P."/>
            <person name="Fairweather N.F."/>
            <person name="Minton N."/>
            <person name="Stabler R."/>
            <person name="Thomson N.R."/>
            <person name="Roberts A.P."/>
            <person name="Cerdeno-Tarraga A.M."/>
            <person name="Wang H."/>
            <person name="Holden M.T.G."/>
            <person name="Wright A."/>
            <person name="Churcher C."/>
            <person name="Quail M.A."/>
            <person name="Baker S."/>
            <person name="Bason N."/>
            <person name="Brooks K."/>
            <person name="Chillingworth T."/>
            <person name="Cronin A."/>
            <person name="Davis P."/>
            <person name="Dowd L."/>
            <person name="Fraser A."/>
            <person name="Feltwell T."/>
            <person name="Hance Z."/>
            <person name="Holroyd S."/>
            <person name="Jagels K."/>
            <person name="Moule S."/>
            <person name="Mungall K."/>
            <person name="Price C."/>
            <person name="Rabbinowitsch E."/>
            <person name="Sharp S."/>
            <person name="Simmonds M."/>
            <person name="Stevens K."/>
            <person name="Unwin L."/>
            <person name="Whithead S."/>
            <person name="Dupuy B."/>
            <person name="Dougan G."/>
            <person name="Barrell B."/>
            <person name="Parkhill J."/>
        </authorList>
    </citation>
    <scope>NUCLEOTIDE SEQUENCE [LARGE SCALE GENOMIC DNA]</scope>
    <source>
        <strain>630</strain>
    </source>
</reference>